<comment type="catalytic activity">
    <reaction>
        <text>Hydrolysis of terminal non-reducing beta-D-galactose residues in beta-D-galactosides.</text>
        <dbReference type="EC" id="3.2.1.23"/>
    </reaction>
</comment>
<comment type="subcellular location">
    <subcellularLocation>
        <location evidence="4">Secreted</location>
        <location evidence="4">Extracellular space</location>
        <location evidence="4">Apoplast</location>
    </subcellularLocation>
</comment>
<comment type="tissue specificity">
    <text evidence="2 3">Ubiquitous.</text>
</comment>
<comment type="similarity">
    <text evidence="4">Belongs to the glycosyl hydrolase 35 family.</text>
</comment>
<keyword id="KW-0052">Apoplast</keyword>
<keyword id="KW-0325">Glycoprotein</keyword>
<keyword id="KW-0326">Glycosidase</keyword>
<keyword id="KW-0378">Hydrolase</keyword>
<keyword id="KW-1185">Reference proteome</keyword>
<keyword id="KW-0964">Secreted</keyword>
<keyword id="KW-0732">Signal</keyword>
<accession>Q9FN08</accession>
<accession>Q9SCV2</accession>
<evidence type="ECO:0000255" key="1"/>
<evidence type="ECO:0000269" key="2">
    <source>
    </source>
</evidence>
<evidence type="ECO:0000269" key="3">
    <source>
    </source>
</evidence>
<evidence type="ECO:0000305" key="4"/>
<gene>
    <name type="primary">BGAL10</name>
    <name type="ordered locus">At5g63810</name>
    <name type="ORF">MGI19.1</name>
</gene>
<reference key="1">
    <citation type="submission" date="1999-10" db="EMBL/GenBank/DDBJ databases">
        <title>The beta-galactosidases are encoding by a multigene family in Arabidopsis thaliana.</title>
        <authorList>
            <person name="Gy I."/>
            <person name="Kreis M."/>
            <person name="Lecharny A."/>
        </authorList>
    </citation>
    <scope>NUCLEOTIDE SEQUENCE [MRNA]</scope>
</reference>
<reference key="2">
    <citation type="journal article" date="1997" name="DNA Res.">
        <title>Structural analysis of Arabidopsis thaliana chromosome 5. III. Sequence features of the regions of 1,191,918 bp covered by seventeen physically assigned P1 clones.</title>
        <authorList>
            <person name="Nakamura Y."/>
            <person name="Sato S."/>
            <person name="Kaneko T."/>
            <person name="Kotani H."/>
            <person name="Asamizu E."/>
            <person name="Miyajima N."/>
            <person name="Tabata S."/>
        </authorList>
    </citation>
    <scope>NUCLEOTIDE SEQUENCE [LARGE SCALE GENOMIC DNA]</scope>
    <source>
        <strain>cv. Columbia</strain>
    </source>
</reference>
<reference key="3">
    <citation type="journal article" date="2017" name="Plant J.">
        <title>Araport11: a complete reannotation of the Arabidopsis thaliana reference genome.</title>
        <authorList>
            <person name="Cheng C.Y."/>
            <person name="Krishnakumar V."/>
            <person name="Chan A.P."/>
            <person name="Thibaud-Nissen F."/>
            <person name="Schobel S."/>
            <person name="Town C.D."/>
        </authorList>
    </citation>
    <scope>GENOME REANNOTATION</scope>
    <source>
        <strain>cv. Columbia</strain>
    </source>
</reference>
<reference key="4">
    <citation type="journal article" date="2003" name="Science">
        <title>Empirical analysis of transcriptional activity in the Arabidopsis genome.</title>
        <authorList>
            <person name="Yamada K."/>
            <person name="Lim J."/>
            <person name="Dale J.M."/>
            <person name="Chen H."/>
            <person name="Shinn P."/>
            <person name="Palm C.J."/>
            <person name="Southwick A.M."/>
            <person name="Wu H.C."/>
            <person name="Kim C.J."/>
            <person name="Nguyen M."/>
            <person name="Pham P.K."/>
            <person name="Cheuk R.F."/>
            <person name="Karlin-Newmann G."/>
            <person name="Liu S.X."/>
            <person name="Lam B."/>
            <person name="Sakano H."/>
            <person name="Wu T."/>
            <person name="Yu G."/>
            <person name="Miranda M."/>
            <person name="Quach H.L."/>
            <person name="Tripp M."/>
            <person name="Chang C.H."/>
            <person name="Lee J.M."/>
            <person name="Toriumi M.J."/>
            <person name="Chan M.M."/>
            <person name="Tang C.C."/>
            <person name="Onodera C.S."/>
            <person name="Deng J.M."/>
            <person name="Akiyama K."/>
            <person name="Ansari Y."/>
            <person name="Arakawa T."/>
            <person name="Banh J."/>
            <person name="Banno F."/>
            <person name="Bowser L."/>
            <person name="Brooks S.Y."/>
            <person name="Carninci P."/>
            <person name="Chao Q."/>
            <person name="Choy N."/>
            <person name="Enju A."/>
            <person name="Goldsmith A.D."/>
            <person name="Gurjal M."/>
            <person name="Hansen N.F."/>
            <person name="Hayashizaki Y."/>
            <person name="Johnson-Hopson C."/>
            <person name="Hsuan V.W."/>
            <person name="Iida K."/>
            <person name="Karnes M."/>
            <person name="Khan S."/>
            <person name="Koesema E."/>
            <person name="Ishida J."/>
            <person name="Jiang P.X."/>
            <person name="Jones T."/>
            <person name="Kawai J."/>
            <person name="Kamiya A."/>
            <person name="Meyers C."/>
            <person name="Nakajima M."/>
            <person name="Narusaka M."/>
            <person name="Seki M."/>
            <person name="Sakurai T."/>
            <person name="Satou M."/>
            <person name="Tamse R."/>
            <person name="Vaysberg M."/>
            <person name="Wallender E.K."/>
            <person name="Wong C."/>
            <person name="Yamamura Y."/>
            <person name="Yuan S."/>
            <person name="Shinozaki K."/>
            <person name="Davis R.W."/>
            <person name="Theologis A."/>
            <person name="Ecker J.R."/>
        </authorList>
    </citation>
    <scope>NUCLEOTIDE SEQUENCE [LARGE SCALE MRNA]</scope>
    <source>
        <strain>cv. Columbia</strain>
    </source>
</reference>
<reference key="5">
    <citation type="journal article" date="2006" name="Plant Cell Physiol.">
        <title>Apoplastic glycosidases active against xyloglucan oligosaccharides of Arabidopsis thaliana.</title>
        <authorList>
            <person name="Iglesias N."/>
            <person name="Abelenda J.A."/>
            <person name="Rodino M."/>
            <person name="Sampedro J."/>
            <person name="Revilla G."/>
            <person name="Zarra I."/>
        </authorList>
    </citation>
    <scope>TISSUE SPECIFICITY</scope>
</reference>
<reference key="6">
    <citation type="journal article" date="2007" name="Phytochemistry">
        <title>Functional genomic analysis of Arabidopsis thaliana glycoside hydrolase family 35.</title>
        <authorList>
            <person name="Ahn Y.O."/>
            <person name="Zheng M."/>
            <person name="Bevan D.R."/>
            <person name="Esen A."/>
            <person name="Shiu S.-H."/>
            <person name="Benson J."/>
            <person name="Peng H.-P."/>
            <person name="Miller J.T."/>
            <person name="Cheng C.-L."/>
            <person name="Poulton J.E."/>
            <person name="Shih M.-C."/>
        </authorList>
    </citation>
    <scope>TISSUE SPECIFICITY</scope>
    <scope>GENE FAMILY</scope>
    <scope>NOMENCLATURE</scope>
</reference>
<proteinExistence type="evidence at transcript level"/>
<name>BGA10_ARATH</name>
<organism>
    <name type="scientific">Arabidopsis thaliana</name>
    <name type="common">Mouse-ear cress</name>
    <dbReference type="NCBI Taxonomy" id="3702"/>
    <lineage>
        <taxon>Eukaryota</taxon>
        <taxon>Viridiplantae</taxon>
        <taxon>Streptophyta</taxon>
        <taxon>Embryophyta</taxon>
        <taxon>Tracheophyta</taxon>
        <taxon>Spermatophyta</taxon>
        <taxon>Magnoliopsida</taxon>
        <taxon>eudicotyledons</taxon>
        <taxon>Gunneridae</taxon>
        <taxon>Pentapetalae</taxon>
        <taxon>rosids</taxon>
        <taxon>malvids</taxon>
        <taxon>Brassicales</taxon>
        <taxon>Brassicaceae</taxon>
        <taxon>Camelineae</taxon>
        <taxon>Arabidopsis</taxon>
    </lineage>
</organism>
<feature type="signal peptide" evidence="1">
    <location>
        <begin position="1"/>
        <end position="29"/>
    </location>
</feature>
<feature type="chain" id="PRO_5000065884" description="Beta-galactosidase 10">
    <location>
        <begin position="30"/>
        <end position="741"/>
    </location>
</feature>
<feature type="active site" description="Proton donor" evidence="1">
    <location>
        <position position="188"/>
    </location>
</feature>
<feature type="active site" description="Nucleophile" evidence="1">
    <location>
        <position position="257"/>
    </location>
</feature>
<feature type="glycosylation site" description="N-linked (GlcNAc...) asparagine" evidence="1">
    <location>
        <position position="31"/>
    </location>
</feature>
<feature type="glycosylation site" description="N-linked (GlcNAc...) asparagine" evidence="1">
    <location>
        <position position="358"/>
    </location>
</feature>
<feature type="glycosylation site" description="N-linked (GlcNAc...) asparagine" evidence="1">
    <location>
        <position position="396"/>
    </location>
</feature>
<feature type="glycosylation site" description="N-linked (GlcNAc...) asparagine" evidence="1">
    <location>
        <position position="469"/>
    </location>
</feature>
<feature type="glycosylation site" description="N-linked (GlcNAc...) asparagine" evidence="1">
    <location>
        <position position="525"/>
    </location>
</feature>
<feature type="glycosylation site" description="N-linked (GlcNAc...) asparagine" evidence="1">
    <location>
        <position position="583"/>
    </location>
</feature>
<feature type="sequence conflict" description="In Ref. 1; CAB64746." evidence="4" ref="1">
    <original>N</original>
    <variation>T</variation>
    <location>
        <position position="544"/>
    </location>
</feature>
<protein>
    <recommendedName>
        <fullName>Beta-galactosidase 10</fullName>
        <shortName>Lactase 10</shortName>
        <ecNumber>3.2.1.23</ecNumber>
    </recommendedName>
</protein>
<dbReference type="EC" id="3.2.1.23"/>
<dbReference type="EMBL" id="AJ270306">
    <property type="protein sequence ID" value="CAB64746.1"/>
    <property type="molecule type" value="mRNA"/>
</dbReference>
<dbReference type="EMBL" id="AB007646">
    <property type="protein sequence ID" value="BAB11029.1"/>
    <property type="molecule type" value="Genomic_DNA"/>
</dbReference>
<dbReference type="EMBL" id="CP002688">
    <property type="protein sequence ID" value="AED97800.1"/>
    <property type="molecule type" value="Genomic_DNA"/>
</dbReference>
<dbReference type="EMBL" id="AY093118">
    <property type="protein sequence ID" value="AAM13117.1"/>
    <property type="molecule type" value="mRNA"/>
</dbReference>
<dbReference type="EMBL" id="BT010338">
    <property type="protein sequence ID" value="AAQ56781.1"/>
    <property type="molecule type" value="mRNA"/>
</dbReference>
<dbReference type="RefSeq" id="NP_201186.1">
    <property type="nucleotide sequence ID" value="NM_125776.2"/>
</dbReference>
<dbReference type="SMR" id="Q9FN08"/>
<dbReference type="FunCoup" id="Q9FN08">
    <property type="interactions" value="35"/>
</dbReference>
<dbReference type="STRING" id="3702.Q9FN08"/>
<dbReference type="CAZy" id="GH35">
    <property type="family name" value="Glycoside Hydrolase Family 35"/>
</dbReference>
<dbReference type="GlyCosmos" id="Q9FN08">
    <property type="glycosylation" value="6 sites, No reported glycans"/>
</dbReference>
<dbReference type="GlyGen" id="Q9FN08">
    <property type="glycosylation" value="6 sites"/>
</dbReference>
<dbReference type="PaxDb" id="3702-AT5G63810.1"/>
<dbReference type="ProteomicsDB" id="240417"/>
<dbReference type="EnsemblPlants" id="AT5G63810.1">
    <property type="protein sequence ID" value="AT5G63810.1"/>
    <property type="gene ID" value="AT5G63810"/>
</dbReference>
<dbReference type="GeneID" id="836501"/>
<dbReference type="Gramene" id="AT5G63810.1">
    <property type="protein sequence ID" value="AT5G63810.1"/>
    <property type="gene ID" value="AT5G63810"/>
</dbReference>
<dbReference type="KEGG" id="ath:AT5G63810"/>
<dbReference type="Araport" id="AT5G63810"/>
<dbReference type="TAIR" id="AT5G63810">
    <property type="gene designation" value="BGAL10"/>
</dbReference>
<dbReference type="eggNOG" id="KOG0496">
    <property type="taxonomic scope" value="Eukaryota"/>
</dbReference>
<dbReference type="HOGENOM" id="CLU_007853_4_0_1"/>
<dbReference type="InParanoid" id="Q9FN08"/>
<dbReference type="OMA" id="WIMCQQF"/>
<dbReference type="OrthoDB" id="1657402at2759"/>
<dbReference type="PhylomeDB" id="Q9FN08"/>
<dbReference type="BioCyc" id="ARA:AT5G63810-MONOMER"/>
<dbReference type="PRO" id="PR:Q9FN08"/>
<dbReference type="Proteomes" id="UP000006548">
    <property type="component" value="Chromosome 5"/>
</dbReference>
<dbReference type="ExpressionAtlas" id="Q9FN08">
    <property type="expression patterns" value="baseline and differential"/>
</dbReference>
<dbReference type="GO" id="GO:0048046">
    <property type="term" value="C:apoplast"/>
    <property type="evidence" value="ECO:0007669"/>
    <property type="project" value="UniProtKB-SubCell"/>
</dbReference>
<dbReference type="GO" id="GO:0009536">
    <property type="term" value="C:plastid"/>
    <property type="evidence" value="ECO:0007005"/>
    <property type="project" value="TAIR"/>
</dbReference>
<dbReference type="GO" id="GO:0004565">
    <property type="term" value="F:beta-galactosidase activity"/>
    <property type="evidence" value="ECO:0000315"/>
    <property type="project" value="CACAO"/>
</dbReference>
<dbReference type="GO" id="GO:0005975">
    <property type="term" value="P:carbohydrate metabolic process"/>
    <property type="evidence" value="ECO:0007669"/>
    <property type="project" value="InterPro"/>
</dbReference>
<dbReference type="FunFam" id="2.60.120.260:FF:000097">
    <property type="entry name" value="Beta-galactosidase"/>
    <property type="match status" value="1"/>
</dbReference>
<dbReference type="FunFam" id="2.60.120.260:FF:000142">
    <property type="entry name" value="Beta-galactosidase"/>
    <property type="match status" value="1"/>
</dbReference>
<dbReference type="FunFam" id="3.20.20.80:FF:000006">
    <property type="entry name" value="Beta-galactosidase"/>
    <property type="match status" value="1"/>
</dbReference>
<dbReference type="Gene3D" id="2.60.120.260">
    <property type="entry name" value="Galactose-binding domain-like"/>
    <property type="match status" value="2"/>
</dbReference>
<dbReference type="Gene3D" id="3.20.20.80">
    <property type="entry name" value="Glycosidases"/>
    <property type="match status" value="1"/>
</dbReference>
<dbReference type="InterPro" id="IPR048913">
    <property type="entry name" value="BetaGal_gal-bd"/>
</dbReference>
<dbReference type="InterPro" id="IPR008979">
    <property type="entry name" value="Galactose-bd-like_sf"/>
</dbReference>
<dbReference type="InterPro" id="IPR041392">
    <property type="entry name" value="GHD"/>
</dbReference>
<dbReference type="InterPro" id="IPR031330">
    <property type="entry name" value="Gly_Hdrlase_35_cat"/>
</dbReference>
<dbReference type="InterPro" id="IPR019801">
    <property type="entry name" value="Glyco_hydro_35_CS"/>
</dbReference>
<dbReference type="InterPro" id="IPR001944">
    <property type="entry name" value="Glycoside_Hdrlase_35"/>
</dbReference>
<dbReference type="InterPro" id="IPR017853">
    <property type="entry name" value="Glycoside_hydrolase_SF"/>
</dbReference>
<dbReference type="PANTHER" id="PTHR23421">
    <property type="entry name" value="BETA-GALACTOSIDASE RELATED"/>
    <property type="match status" value="1"/>
</dbReference>
<dbReference type="Pfam" id="PF21467">
    <property type="entry name" value="BetaGal_gal-bd"/>
    <property type="match status" value="1"/>
</dbReference>
<dbReference type="Pfam" id="PF17834">
    <property type="entry name" value="GHD"/>
    <property type="match status" value="1"/>
</dbReference>
<dbReference type="Pfam" id="PF01301">
    <property type="entry name" value="Glyco_hydro_35"/>
    <property type="match status" value="1"/>
</dbReference>
<dbReference type="PRINTS" id="PR00742">
    <property type="entry name" value="GLHYDRLASE35"/>
</dbReference>
<dbReference type="SUPFAM" id="SSF51445">
    <property type="entry name" value="(Trans)glycosidases"/>
    <property type="match status" value="1"/>
</dbReference>
<dbReference type="SUPFAM" id="SSF49785">
    <property type="entry name" value="Galactose-binding domain-like"/>
    <property type="match status" value="2"/>
</dbReference>
<dbReference type="PROSITE" id="PS01182">
    <property type="entry name" value="GLYCOSYL_HYDROL_F35"/>
    <property type="match status" value="1"/>
</dbReference>
<sequence length="741" mass="83102">MNRVTTESIASTAILVVMVFLFSWRSIEAANVSYDHRSLTIGNRRQLIISAAIHYPRSVPAMWPSLVQTAKEGGCNAIESYVFWNGHEPSPGKYYFGGRYNIVKFIKIVQQAGMHMILRIGPFVAAEWNYGGVPVWLHYVPGTVFRADNEPWKHYMESFTTYIVNLLKQEKLFAPQGGPIILSQVENEYGYYEKDYGEGGKRYAQWSASMAVSQNIGVPWMMCQQWDAPPTVISTCNGFYCDQFTPNTPDKPKIWTENWPGWFKTFGGRDPHRPAEDVAYSVARFFGKGGSVHNYYMYHGGTNFGRTSGGPFITTSYDYEAPIDEYGLPRLPKWGHLKDLHKAIMLSENLLISGEHQNFTLGHSLEADVYTDSSGTCAAFLSNLDDKNDKAVMFRNTSYHLPAWSVSILPDCKTEVFNTAKVTSKSSKVEMLPEDLKSSSGLKWEVFSEKPGIWGAADFVKNELVDHINTTKDTTDYLWYTTSITVSENEAFLKKGSSPVLFIESKGHTLHVFINKEYLGTATGNGTHVPFKLKKPVALKAGENNIDLLSMTVGLANAGSFYEWVGAGLTSVSIKGFNKGTLNLTNSKWSYKLGVEGEHLELFKPGNSGAVKWTVTTKPPKKQPLTWYKVVIEPPSGSEPVGLDMISMGKGMAWLNGEEIGRYWPRIARKNSPNDECVKECDYRGKFMPDKCLTGCGEPSQRWYHVPRSWFKSSGNELVIFEEKGGNPMKIKLSKRKVSVV</sequence>